<gene>
    <name evidence="2" type="primary">tuf2</name>
    <name type="ordered locus">Amet_4494</name>
</gene>
<name>EFTU2_ALKMQ</name>
<feature type="chain" id="PRO_0000337311" description="Elongation factor Tu 2">
    <location>
        <begin position="1"/>
        <end position="397"/>
    </location>
</feature>
<feature type="domain" description="tr-type G">
    <location>
        <begin position="10"/>
        <end position="206"/>
    </location>
</feature>
<feature type="region of interest" description="G1" evidence="1">
    <location>
        <begin position="19"/>
        <end position="26"/>
    </location>
</feature>
<feature type="region of interest" description="G2" evidence="1">
    <location>
        <begin position="61"/>
        <end position="65"/>
    </location>
</feature>
<feature type="region of interest" description="G3" evidence="1">
    <location>
        <begin position="82"/>
        <end position="85"/>
    </location>
</feature>
<feature type="region of interest" description="G4" evidence="1">
    <location>
        <begin position="137"/>
        <end position="140"/>
    </location>
</feature>
<feature type="region of interest" description="G5" evidence="1">
    <location>
        <begin position="175"/>
        <end position="177"/>
    </location>
</feature>
<feature type="binding site" evidence="2">
    <location>
        <begin position="19"/>
        <end position="26"/>
    </location>
    <ligand>
        <name>GTP</name>
        <dbReference type="ChEBI" id="CHEBI:37565"/>
    </ligand>
</feature>
<feature type="binding site" evidence="2">
    <location>
        <position position="26"/>
    </location>
    <ligand>
        <name>Mg(2+)</name>
        <dbReference type="ChEBI" id="CHEBI:18420"/>
    </ligand>
</feature>
<feature type="binding site" evidence="2">
    <location>
        <begin position="82"/>
        <end position="86"/>
    </location>
    <ligand>
        <name>GTP</name>
        <dbReference type="ChEBI" id="CHEBI:37565"/>
    </ligand>
</feature>
<feature type="binding site" evidence="2">
    <location>
        <begin position="137"/>
        <end position="140"/>
    </location>
    <ligand>
        <name>GTP</name>
        <dbReference type="ChEBI" id="CHEBI:37565"/>
    </ligand>
</feature>
<protein>
    <recommendedName>
        <fullName evidence="2">Elongation factor Tu 2</fullName>
        <shortName evidence="2">EF-Tu 2</shortName>
        <ecNumber evidence="2">3.6.5.3</ecNumber>
    </recommendedName>
</protein>
<dbReference type="EC" id="3.6.5.3" evidence="2"/>
<dbReference type="EMBL" id="CP000724">
    <property type="protein sequence ID" value="ABR50566.1"/>
    <property type="status" value="ALT_INIT"/>
    <property type="molecule type" value="Genomic_DNA"/>
</dbReference>
<dbReference type="RefSeq" id="WP_041721235.1">
    <property type="nucleotide sequence ID" value="NC_009633.1"/>
</dbReference>
<dbReference type="SMR" id="A6TWJ8"/>
<dbReference type="STRING" id="293826.Amet_4494"/>
<dbReference type="KEGG" id="amt:Amet_4494"/>
<dbReference type="eggNOG" id="COG0050">
    <property type="taxonomic scope" value="Bacteria"/>
</dbReference>
<dbReference type="HOGENOM" id="CLU_007265_0_1_9"/>
<dbReference type="OrthoDB" id="9804504at2"/>
<dbReference type="Proteomes" id="UP000001572">
    <property type="component" value="Chromosome"/>
</dbReference>
<dbReference type="GO" id="GO:0005829">
    <property type="term" value="C:cytosol"/>
    <property type="evidence" value="ECO:0007669"/>
    <property type="project" value="TreeGrafter"/>
</dbReference>
<dbReference type="GO" id="GO:0005525">
    <property type="term" value="F:GTP binding"/>
    <property type="evidence" value="ECO:0007669"/>
    <property type="project" value="UniProtKB-UniRule"/>
</dbReference>
<dbReference type="GO" id="GO:0003924">
    <property type="term" value="F:GTPase activity"/>
    <property type="evidence" value="ECO:0007669"/>
    <property type="project" value="InterPro"/>
</dbReference>
<dbReference type="GO" id="GO:0003746">
    <property type="term" value="F:translation elongation factor activity"/>
    <property type="evidence" value="ECO:0007669"/>
    <property type="project" value="UniProtKB-UniRule"/>
</dbReference>
<dbReference type="CDD" id="cd01884">
    <property type="entry name" value="EF_Tu"/>
    <property type="match status" value="1"/>
</dbReference>
<dbReference type="CDD" id="cd03697">
    <property type="entry name" value="EFTU_II"/>
    <property type="match status" value="1"/>
</dbReference>
<dbReference type="CDD" id="cd03707">
    <property type="entry name" value="EFTU_III"/>
    <property type="match status" value="1"/>
</dbReference>
<dbReference type="FunFam" id="2.40.30.10:FF:000001">
    <property type="entry name" value="Elongation factor Tu"/>
    <property type="match status" value="1"/>
</dbReference>
<dbReference type="FunFam" id="3.40.50.300:FF:000003">
    <property type="entry name" value="Elongation factor Tu"/>
    <property type="match status" value="1"/>
</dbReference>
<dbReference type="Gene3D" id="3.40.50.300">
    <property type="entry name" value="P-loop containing nucleotide triphosphate hydrolases"/>
    <property type="match status" value="1"/>
</dbReference>
<dbReference type="Gene3D" id="2.40.30.10">
    <property type="entry name" value="Translation factors"/>
    <property type="match status" value="2"/>
</dbReference>
<dbReference type="HAMAP" id="MF_00118_B">
    <property type="entry name" value="EF_Tu_B"/>
    <property type="match status" value="1"/>
</dbReference>
<dbReference type="InterPro" id="IPR041709">
    <property type="entry name" value="EF-Tu_GTP-bd"/>
</dbReference>
<dbReference type="InterPro" id="IPR050055">
    <property type="entry name" value="EF-Tu_GTPase"/>
</dbReference>
<dbReference type="InterPro" id="IPR004161">
    <property type="entry name" value="EFTu-like_2"/>
</dbReference>
<dbReference type="InterPro" id="IPR033720">
    <property type="entry name" value="EFTU_2"/>
</dbReference>
<dbReference type="InterPro" id="IPR031157">
    <property type="entry name" value="G_TR_CS"/>
</dbReference>
<dbReference type="InterPro" id="IPR027417">
    <property type="entry name" value="P-loop_NTPase"/>
</dbReference>
<dbReference type="InterPro" id="IPR005225">
    <property type="entry name" value="Small_GTP-bd"/>
</dbReference>
<dbReference type="InterPro" id="IPR000795">
    <property type="entry name" value="T_Tr_GTP-bd_dom"/>
</dbReference>
<dbReference type="InterPro" id="IPR009000">
    <property type="entry name" value="Transl_B-barrel_sf"/>
</dbReference>
<dbReference type="InterPro" id="IPR009001">
    <property type="entry name" value="Transl_elong_EF1A/Init_IF2_C"/>
</dbReference>
<dbReference type="InterPro" id="IPR004541">
    <property type="entry name" value="Transl_elong_EFTu/EF1A_bac/org"/>
</dbReference>
<dbReference type="InterPro" id="IPR004160">
    <property type="entry name" value="Transl_elong_EFTu/EF1A_C"/>
</dbReference>
<dbReference type="NCBIfam" id="TIGR00485">
    <property type="entry name" value="EF-Tu"/>
    <property type="match status" value="1"/>
</dbReference>
<dbReference type="NCBIfam" id="NF000766">
    <property type="entry name" value="PRK00049.1"/>
    <property type="match status" value="1"/>
</dbReference>
<dbReference type="NCBIfam" id="NF009372">
    <property type="entry name" value="PRK12735.1"/>
    <property type="match status" value="1"/>
</dbReference>
<dbReference type="NCBIfam" id="NF009373">
    <property type="entry name" value="PRK12736.1"/>
    <property type="match status" value="1"/>
</dbReference>
<dbReference type="NCBIfam" id="TIGR00231">
    <property type="entry name" value="small_GTP"/>
    <property type="match status" value="1"/>
</dbReference>
<dbReference type="PANTHER" id="PTHR43721:SF22">
    <property type="entry name" value="ELONGATION FACTOR TU, MITOCHONDRIAL"/>
    <property type="match status" value="1"/>
</dbReference>
<dbReference type="PANTHER" id="PTHR43721">
    <property type="entry name" value="ELONGATION FACTOR TU-RELATED"/>
    <property type="match status" value="1"/>
</dbReference>
<dbReference type="Pfam" id="PF00009">
    <property type="entry name" value="GTP_EFTU"/>
    <property type="match status" value="1"/>
</dbReference>
<dbReference type="Pfam" id="PF03144">
    <property type="entry name" value="GTP_EFTU_D2"/>
    <property type="match status" value="1"/>
</dbReference>
<dbReference type="Pfam" id="PF03143">
    <property type="entry name" value="GTP_EFTU_D3"/>
    <property type="match status" value="1"/>
</dbReference>
<dbReference type="PRINTS" id="PR00315">
    <property type="entry name" value="ELONGATNFCT"/>
</dbReference>
<dbReference type="SUPFAM" id="SSF50465">
    <property type="entry name" value="EF-Tu/eEF-1alpha/eIF2-gamma C-terminal domain"/>
    <property type="match status" value="1"/>
</dbReference>
<dbReference type="SUPFAM" id="SSF52540">
    <property type="entry name" value="P-loop containing nucleoside triphosphate hydrolases"/>
    <property type="match status" value="1"/>
</dbReference>
<dbReference type="SUPFAM" id="SSF50447">
    <property type="entry name" value="Translation proteins"/>
    <property type="match status" value="1"/>
</dbReference>
<dbReference type="PROSITE" id="PS00301">
    <property type="entry name" value="G_TR_1"/>
    <property type="match status" value="1"/>
</dbReference>
<dbReference type="PROSITE" id="PS51722">
    <property type="entry name" value="G_TR_2"/>
    <property type="match status" value="1"/>
</dbReference>
<reference key="1">
    <citation type="journal article" date="2016" name="Genome Announc.">
        <title>Complete genome sequence of Alkaliphilus metalliredigens strain QYMF, an alkaliphilic and metal-reducing bacterium isolated from borax-contaminated leachate ponds.</title>
        <authorList>
            <person name="Hwang C."/>
            <person name="Copeland A."/>
            <person name="Lucas S."/>
            <person name="Lapidus A."/>
            <person name="Barry K."/>
            <person name="Detter J.C."/>
            <person name="Glavina Del Rio T."/>
            <person name="Hammon N."/>
            <person name="Israni S."/>
            <person name="Dalin E."/>
            <person name="Tice H."/>
            <person name="Pitluck S."/>
            <person name="Chertkov O."/>
            <person name="Brettin T."/>
            <person name="Bruce D."/>
            <person name="Han C."/>
            <person name="Schmutz J."/>
            <person name="Larimer F."/>
            <person name="Land M.L."/>
            <person name="Hauser L."/>
            <person name="Kyrpides N."/>
            <person name="Mikhailova N."/>
            <person name="Ye Q."/>
            <person name="Zhou J."/>
            <person name="Richardson P."/>
            <person name="Fields M.W."/>
        </authorList>
    </citation>
    <scope>NUCLEOTIDE SEQUENCE [LARGE SCALE GENOMIC DNA]</scope>
    <source>
        <strain>QYMF</strain>
    </source>
</reference>
<sequence length="397" mass="43722">MGKAKYERSKPHVNIGTIGHVDHGKTTLTAAITITMHNRYGTGGAVAFDMIDKAPEERERGITISTAHVEYETDKRHYAHVDCPGHADYVKNMITGAAQMDGAILVCSAADGPMPQTREHILLSRQVGVPYIVVFLNKCDMVDDEELLELVEMEVRDLLNMYEFPGDDTPVIMGSALKALEDPAGPWGDKIVELFDAIDTWIPEPVRDTDKPFLMPVEDVFSITGRGTVATGRIERGIVKVQEEISLVGLSEAPRKLVVTGVEMFRKLLDQGQAGDNVGILLRGIQRDEIERGQVLAKTGSIQPHTKFMAEVYVLKKEEGGRHTPFFDGYRPQFYFRTTDVTGSIKLPEGVEMVMPGDNITMEIELISPIATEEGLRFAIREGGRTVGAGVVASIIE</sequence>
<comment type="function">
    <text evidence="2">GTP hydrolase that promotes the GTP-dependent binding of aminoacyl-tRNA to the A-site of ribosomes during protein biosynthesis.</text>
</comment>
<comment type="catalytic activity">
    <reaction evidence="2">
        <text>GTP + H2O = GDP + phosphate + H(+)</text>
        <dbReference type="Rhea" id="RHEA:19669"/>
        <dbReference type="ChEBI" id="CHEBI:15377"/>
        <dbReference type="ChEBI" id="CHEBI:15378"/>
        <dbReference type="ChEBI" id="CHEBI:37565"/>
        <dbReference type="ChEBI" id="CHEBI:43474"/>
        <dbReference type="ChEBI" id="CHEBI:58189"/>
        <dbReference type="EC" id="3.6.5.3"/>
    </reaction>
    <physiologicalReaction direction="left-to-right" evidence="2">
        <dbReference type="Rhea" id="RHEA:19670"/>
    </physiologicalReaction>
</comment>
<comment type="subunit">
    <text evidence="2">Monomer.</text>
</comment>
<comment type="subcellular location">
    <subcellularLocation>
        <location evidence="2">Cytoplasm</location>
    </subcellularLocation>
</comment>
<comment type="similarity">
    <text evidence="2">Belongs to the TRAFAC class translation factor GTPase superfamily. Classic translation factor GTPase family. EF-Tu/EF-1A subfamily.</text>
</comment>
<comment type="sequence caution" evidence="3">
    <conflict type="erroneous initiation">
        <sequence resource="EMBL-CDS" id="ABR50566"/>
    </conflict>
</comment>
<proteinExistence type="inferred from homology"/>
<keyword id="KW-0963">Cytoplasm</keyword>
<keyword id="KW-0251">Elongation factor</keyword>
<keyword id="KW-0342">GTP-binding</keyword>
<keyword id="KW-0378">Hydrolase</keyword>
<keyword id="KW-0460">Magnesium</keyword>
<keyword id="KW-0479">Metal-binding</keyword>
<keyword id="KW-0547">Nucleotide-binding</keyword>
<keyword id="KW-0648">Protein biosynthesis</keyword>
<keyword id="KW-1185">Reference proteome</keyword>
<evidence type="ECO:0000250" key="1"/>
<evidence type="ECO:0000255" key="2">
    <source>
        <dbReference type="HAMAP-Rule" id="MF_00118"/>
    </source>
</evidence>
<evidence type="ECO:0000305" key="3"/>
<accession>A6TWJ8</accession>
<organism>
    <name type="scientific">Alkaliphilus metalliredigens (strain QYMF)</name>
    <dbReference type="NCBI Taxonomy" id="293826"/>
    <lineage>
        <taxon>Bacteria</taxon>
        <taxon>Bacillati</taxon>
        <taxon>Bacillota</taxon>
        <taxon>Clostridia</taxon>
        <taxon>Peptostreptococcales</taxon>
        <taxon>Natronincolaceae</taxon>
        <taxon>Alkaliphilus</taxon>
    </lineage>
</organism>